<comment type="function">
    <text evidence="1">One of the primary rRNA binding proteins, it binds directly to 16S rRNA where it nucleates assembly of the body of the 30S subunit.</text>
</comment>
<comment type="function">
    <text evidence="1">With S5 and S12 plays an important role in translational accuracy.</text>
</comment>
<comment type="subunit">
    <text evidence="1">Part of the 30S ribosomal subunit. Contacts protein S5. The interaction surface between S4 and S5 is involved in control of translational fidelity.</text>
</comment>
<comment type="similarity">
    <text evidence="1">Belongs to the universal ribosomal protein uS4 family.</text>
</comment>
<dbReference type="EMBL" id="CP001173">
    <property type="protein sequence ID" value="ACI27992.1"/>
    <property type="molecule type" value="Genomic_DNA"/>
</dbReference>
<dbReference type="RefSeq" id="WP_000135247.1">
    <property type="nucleotide sequence ID" value="NC_011333.1"/>
</dbReference>
<dbReference type="SMR" id="B5Z8U3"/>
<dbReference type="GeneID" id="31757690"/>
<dbReference type="KEGG" id="hpg:HPG27_1244"/>
<dbReference type="HOGENOM" id="CLU_092403_0_2_7"/>
<dbReference type="Proteomes" id="UP000001735">
    <property type="component" value="Chromosome"/>
</dbReference>
<dbReference type="GO" id="GO:0015935">
    <property type="term" value="C:small ribosomal subunit"/>
    <property type="evidence" value="ECO:0007669"/>
    <property type="project" value="InterPro"/>
</dbReference>
<dbReference type="GO" id="GO:0019843">
    <property type="term" value="F:rRNA binding"/>
    <property type="evidence" value="ECO:0007669"/>
    <property type="project" value="UniProtKB-UniRule"/>
</dbReference>
<dbReference type="GO" id="GO:0003735">
    <property type="term" value="F:structural constituent of ribosome"/>
    <property type="evidence" value="ECO:0007669"/>
    <property type="project" value="InterPro"/>
</dbReference>
<dbReference type="GO" id="GO:0042274">
    <property type="term" value="P:ribosomal small subunit biogenesis"/>
    <property type="evidence" value="ECO:0007669"/>
    <property type="project" value="TreeGrafter"/>
</dbReference>
<dbReference type="GO" id="GO:0006412">
    <property type="term" value="P:translation"/>
    <property type="evidence" value="ECO:0007669"/>
    <property type="project" value="UniProtKB-UniRule"/>
</dbReference>
<dbReference type="CDD" id="cd00165">
    <property type="entry name" value="S4"/>
    <property type="match status" value="1"/>
</dbReference>
<dbReference type="FunFam" id="1.10.1050.10:FF:000001">
    <property type="entry name" value="30S ribosomal protein S4"/>
    <property type="match status" value="1"/>
</dbReference>
<dbReference type="FunFam" id="3.10.290.10:FF:000001">
    <property type="entry name" value="30S ribosomal protein S4"/>
    <property type="match status" value="1"/>
</dbReference>
<dbReference type="Gene3D" id="1.10.1050.10">
    <property type="entry name" value="Ribosomal Protein S4 Delta 41, Chain A, domain 1"/>
    <property type="match status" value="1"/>
</dbReference>
<dbReference type="Gene3D" id="3.10.290.10">
    <property type="entry name" value="RNA-binding S4 domain"/>
    <property type="match status" value="1"/>
</dbReference>
<dbReference type="HAMAP" id="MF_01306_B">
    <property type="entry name" value="Ribosomal_uS4_B"/>
    <property type="match status" value="1"/>
</dbReference>
<dbReference type="InterPro" id="IPR022801">
    <property type="entry name" value="Ribosomal_uS4"/>
</dbReference>
<dbReference type="InterPro" id="IPR005709">
    <property type="entry name" value="Ribosomal_uS4_bac-type"/>
</dbReference>
<dbReference type="InterPro" id="IPR018079">
    <property type="entry name" value="Ribosomal_uS4_CS"/>
</dbReference>
<dbReference type="InterPro" id="IPR001912">
    <property type="entry name" value="Ribosomal_uS4_N"/>
</dbReference>
<dbReference type="InterPro" id="IPR002942">
    <property type="entry name" value="S4_RNA-bd"/>
</dbReference>
<dbReference type="InterPro" id="IPR036986">
    <property type="entry name" value="S4_RNA-bd_sf"/>
</dbReference>
<dbReference type="NCBIfam" id="NF003717">
    <property type="entry name" value="PRK05327.1"/>
    <property type="match status" value="1"/>
</dbReference>
<dbReference type="NCBIfam" id="TIGR01017">
    <property type="entry name" value="rpsD_bact"/>
    <property type="match status" value="1"/>
</dbReference>
<dbReference type="PANTHER" id="PTHR11831">
    <property type="entry name" value="30S 40S RIBOSOMAL PROTEIN"/>
    <property type="match status" value="1"/>
</dbReference>
<dbReference type="PANTHER" id="PTHR11831:SF4">
    <property type="entry name" value="SMALL RIBOSOMAL SUBUNIT PROTEIN US4M"/>
    <property type="match status" value="1"/>
</dbReference>
<dbReference type="Pfam" id="PF00163">
    <property type="entry name" value="Ribosomal_S4"/>
    <property type="match status" value="1"/>
</dbReference>
<dbReference type="Pfam" id="PF01479">
    <property type="entry name" value="S4"/>
    <property type="match status" value="1"/>
</dbReference>
<dbReference type="SMART" id="SM01390">
    <property type="entry name" value="Ribosomal_S4"/>
    <property type="match status" value="1"/>
</dbReference>
<dbReference type="SMART" id="SM00363">
    <property type="entry name" value="S4"/>
    <property type="match status" value="1"/>
</dbReference>
<dbReference type="SUPFAM" id="SSF55174">
    <property type="entry name" value="Alpha-L RNA-binding motif"/>
    <property type="match status" value="1"/>
</dbReference>
<dbReference type="PROSITE" id="PS00632">
    <property type="entry name" value="RIBOSOMAL_S4"/>
    <property type="match status" value="1"/>
</dbReference>
<dbReference type="PROSITE" id="PS50889">
    <property type="entry name" value="S4"/>
    <property type="match status" value="1"/>
</dbReference>
<protein>
    <recommendedName>
        <fullName evidence="1">Small ribosomal subunit protein uS4</fullName>
    </recommendedName>
    <alternativeName>
        <fullName evidence="2">30S ribosomal protein S4</fullName>
    </alternativeName>
</protein>
<reference key="1">
    <citation type="journal article" date="2009" name="J. Bacteriol.">
        <title>The complete genome sequence of Helicobacter pylori strain G27.</title>
        <authorList>
            <person name="Baltrus D.A."/>
            <person name="Amieva M.R."/>
            <person name="Covacci A."/>
            <person name="Lowe T.M."/>
            <person name="Merrell D.S."/>
            <person name="Ottemann K.M."/>
            <person name="Stein M."/>
            <person name="Salama N.R."/>
            <person name="Guillemin K."/>
        </authorList>
    </citation>
    <scope>NUCLEOTIDE SEQUENCE [LARGE SCALE GENOMIC DNA]</scope>
    <source>
        <strain>G27</strain>
    </source>
</reference>
<accession>B5Z8U3</accession>
<proteinExistence type="inferred from homology"/>
<sequence>MARYRGAVERLERRFGVSLALKGERRLSGKSALDKRAYGPGQHGQRRAKTSDYGLQLKEKQKAKMMYGISEKQFRSIFVEANRLDGNTGENLIRLIERRLDNVVYRMGFATTRSSARQLVTHGHVLVDGKRLDIPSYFVRSGQKIEIKEKTKSNPQVVRAMELTAQTGIVPWIDVEKDKKYGIFTRYPEREEVVVPIEERLIVELYSK</sequence>
<feature type="chain" id="PRO_1000140743" description="Small ribosomal subunit protein uS4">
    <location>
        <begin position="1"/>
        <end position="208"/>
    </location>
</feature>
<feature type="domain" description="S4 RNA-binding" evidence="1">
    <location>
        <begin position="98"/>
        <end position="161"/>
    </location>
</feature>
<evidence type="ECO:0000255" key="1">
    <source>
        <dbReference type="HAMAP-Rule" id="MF_01306"/>
    </source>
</evidence>
<evidence type="ECO:0000305" key="2"/>
<name>RS4_HELPG</name>
<keyword id="KW-1185">Reference proteome</keyword>
<keyword id="KW-0687">Ribonucleoprotein</keyword>
<keyword id="KW-0689">Ribosomal protein</keyword>
<keyword id="KW-0694">RNA-binding</keyword>
<keyword id="KW-0699">rRNA-binding</keyword>
<gene>
    <name evidence="1" type="primary">rpsD</name>
    <name type="ordered locus">HPG27_1244</name>
</gene>
<organism>
    <name type="scientific">Helicobacter pylori (strain G27)</name>
    <dbReference type="NCBI Taxonomy" id="563041"/>
    <lineage>
        <taxon>Bacteria</taxon>
        <taxon>Pseudomonadati</taxon>
        <taxon>Campylobacterota</taxon>
        <taxon>Epsilonproteobacteria</taxon>
        <taxon>Campylobacterales</taxon>
        <taxon>Helicobacteraceae</taxon>
        <taxon>Helicobacter</taxon>
    </lineage>
</organism>